<proteinExistence type="inferred from homology"/>
<comment type="function">
    <text evidence="1">Cell division protein that is part of the divisome complex and is recruited early to the Z-ring. Probably stimulates Z-ring formation, perhaps through the cross-linking of FtsZ protofilaments. Its function overlaps with FtsA.</text>
</comment>
<comment type="subunit">
    <text evidence="1">Homodimer. Interacts with FtsZ.</text>
</comment>
<comment type="subcellular location">
    <subcellularLocation>
        <location evidence="1">Cytoplasm</location>
    </subcellularLocation>
    <text evidence="1">Localizes to the division site, in a FtsZ-dependent manner.</text>
</comment>
<comment type="similarity">
    <text evidence="1">Belongs to the SepF family.</text>
</comment>
<organism>
    <name type="scientific">Coprothermobacter proteolyticus (strain ATCC 35245 / DSM 5265 / OCM 4 / BT)</name>
    <dbReference type="NCBI Taxonomy" id="309798"/>
    <lineage>
        <taxon>Bacteria</taxon>
        <taxon>Pseudomonadati</taxon>
        <taxon>Coprothermobacterota</taxon>
        <taxon>Coprothermobacteria</taxon>
        <taxon>Coprothermobacterales</taxon>
        <taxon>Coprothermobacteraceae</taxon>
        <taxon>Coprothermobacter</taxon>
    </lineage>
</organism>
<evidence type="ECO:0000255" key="1">
    <source>
        <dbReference type="HAMAP-Rule" id="MF_01197"/>
    </source>
</evidence>
<reference key="1">
    <citation type="submission" date="2008-08" db="EMBL/GenBank/DDBJ databases">
        <title>The complete genome sequence of Coprothermobacter proteolyticus strain ATCC 5245 / DSM 5265 / BT.</title>
        <authorList>
            <person name="Dodson R.J."/>
            <person name="Durkin A.S."/>
            <person name="Wu M."/>
            <person name="Eisen J."/>
            <person name="Sutton G."/>
        </authorList>
    </citation>
    <scope>NUCLEOTIDE SEQUENCE [LARGE SCALE GENOMIC DNA]</scope>
    <source>
        <strain>ATCC 35245 / DSM 5265 / OCM 4 / BT</strain>
    </source>
</reference>
<dbReference type="EMBL" id="CP001145">
    <property type="protein sequence ID" value="ACI16784.1"/>
    <property type="molecule type" value="Genomic_DNA"/>
</dbReference>
<dbReference type="RefSeq" id="WP_012543436.1">
    <property type="nucleotide sequence ID" value="NC_011295.1"/>
</dbReference>
<dbReference type="SMR" id="B5Y7T0"/>
<dbReference type="STRING" id="309798.COPRO5265_0466"/>
<dbReference type="KEGG" id="cpo:COPRO5265_0466"/>
<dbReference type="eggNOG" id="COG1799">
    <property type="taxonomic scope" value="Bacteria"/>
</dbReference>
<dbReference type="HOGENOM" id="CLU_1841723_0_0_9"/>
<dbReference type="OrthoDB" id="9815206at2"/>
<dbReference type="Proteomes" id="UP000001732">
    <property type="component" value="Chromosome"/>
</dbReference>
<dbReference type="GO" id="GO:0005737">
    <property type="term" value="C:cytoplasm"/>
    <property type="evidence" value="ECO:0007669"/>
    <property type="project" value="UniProtKB-SubCell"/>
</dbReference>
<dbReference type="GO" id="GO:0000917">
    <property type="term" value="P:division septum assembly"/>
    <property type="evidence" value="ECO:0007669"/>
    <property type="project" value="UniProtKB-KW"/>
</dbReference>
<dbReference type="GO" id="GO:0043093">
    <property type="term" value="P:FtsZ-dependent cytokinesis"/>
    <property type="evidence" value="ECO:0007669"/>
    <property type="project" value="UniProtKB-UniRule"/>
</dbReference>
<dbReference type="Gene3D" id="3.30.110.150">
    <property type="entry name" value="SepF-like protein"/>
    <property type="match status" value="1"/>
</dbReference>
<dbReference type="HAMAP" id="MF_01197">
    <property type="entry name" value="SepF"/>
    <property type="match status" value="1"/>
</dbReference>
<dbReference type="InterPro" id="IPR023052">
    <property type="entry name" value="Cell_div_SepF"/>
</dbReference>
<dbReference type="InterPro" id="IPR007561">
    <property type="entry name" value="Cell_div_SepF/SepF-rel"/>
</dbReference>
<dbReference type="InterPro" id="IPR038594">
    <property type="entry name" value="SepF-like_sf"/>
</dbReference>
<dbReference type="PANTHER" id="PTHR35798">
    <property type="entry name" value="CELL DIVISION PROTEIN SEPF"/>
    <property type="match status" value="1"/>
</dbReference>
<dbReference type="PANTHER" id="PTHR35798:SF1">
    <property type="entry name" value="CELL DIVISION PROTEIN SEPF"/>
    <property type="match status" value="1"/>
</dbReference>
<dbReference type="Pfam" id="PF04472">
    <property type="entry name" value="SepF"/>
    <property type="match status" value="1"/>
</dbReference>
<feature type="chain" id="PRO_1000138465" description="Cell division protein SepF">
    <location>
        <begin position="1"/>
        <end position="139"/>
    </location>
</feature>
<accession>B5Y7T0</accession>
<name>SEPF_COPPD</name>
<keyword id="KW-0131">Cell cycle</keyword>
<keyword id="KW-0132">Cell division</keyword>
<keyword id="KW-0963">Cytoplasm</keyword>
<keyword id="KW-1185">Reference proteome</keyword>
<keyword id="KW-0717">Septation</keyword>
<protein>
    <recommendedName>
        <fullName evidence="1">Cell division protein SepF</fullName>
    </recommendedName>
</protein>
<sequence>MAEGGFWKKLTNFFTASEEDEDIIEEDYMDEGYEAEEGTGFVPVQTRAVPVGSTIWVYQPSSFSFDVDSSFIGARIKDGYIIILNLQDLDDLSAQRLIDFVSGALYSVEGKLKAISSSVFLLVPKNVRVESFNEGFGTE</sequence>
<gene>
    <name evidence="1" type="primary">sepF</name>
    <name type="ordered locus">COPRO5265_0466</name>
</gene>